<organism>
    <name type="scientific">Aspergillus oryzae (strain ATCC 42149 / RIB 40)</name>
    <name type="common">Yellow koji mold</name>
    <dbReference type="NCBI Taxonomy" id="510516"/>
    <lineage>
        <taxon>Eukaryota</taxon>
        <taxon>Fungi</taxon>
        <taxon>Dikarya</taxon>
        <taxon>Ascomycota</taxon>
        <taxon>Pezizomycotina</taxon>
        <taxon>Eurotiomycetes</taxon>
        <taxon>Eurotiomycetidae</taxon>
        <taxon>Eurotiales</taxon>
        <taxon>Aspergillaceae</taxon>
        <taxon>Aspergillus</taxon>
        <taxon>Aspergillus subgen. Circumdati</taxon>
    </lineage>
</organism>
<feature type="chain" id="PRO_0000318019" description="Autophagy-related protein 22-2">
    <location>
        <begin position="1"/>
        <end position="607"/>
    </location>
</feature>
<feature type="transmembrane region" description="Helical" evidence="2">
    <location>
        <begin position="41"/>
        <end position="61"/>
    </location>
</feature>
<feature type="transmembrane region" description="Helical" evidence="2">
    <location>
        <begin position="119"/>
        <end position="139"/>
    </location>
</feature>
<feature type="transmembrane region" description="Helical" evidence="2">
    <location>
        <begin position="151"/>
        <end position="170"/>
    </location>
</feature>
<feature type="transmembrane region" description="Helical" evidence="2">
    <location>
        <begin position="188"/>
        <end position="208"/>
    </location>
</feature>
<feature type="transmembrane region" description="Helical" evidence="2">
    <location>
        <begin position="274"/>
        <end position="294"/>
    </location>
</feature>
<feature type="transmembrane region" description="Helical" evidence="2">
    <location>
        <begin position="307"/>
        <end position="327"/>
    </location>
</feature>
<feature type="transmembrane region" description="Helical" evidence="2">
    <location>
        <begin position="379"/>
        <end position="399"/>
    </location>
</feature>
<feature type="transmembrane region" description="Helical" evidence="2">
    <location>
        <begin position="415"/>
        <end position="435"/>
    </location>
</feature>
<feature type="transmembrane region" description="Helical" evidence="2">
    <location>
        <begin position="450"/>
        <end position="470"/>
    </location>
</feature>
<feature type="transmembrane region" description="Helical" evidence="2">
    <location>
        <begin position="485"/>
        <end position="507"/>
    </location>
</feature>
<feature type="transmembrane region" description="Helical" evidence="2">
    <location>
        <begin position="519"/>
        <end position="541"/>
    </location>
</feature>
<feature type="transmembrane region" description="Helical" evidence="2">
    <location>
        <begin position="550"/>
        <end position="570"/>
    </location>
</feature>
<feature type="region of interest" description="Disordered" evidence="3">
    <location>
        <begin position="1"/>
        <end position="29"/>
    </location>
</feature>
<feature type="region of interest" description="Disordered" evidence="3">
    <location>
        <begin position="235"/>
        <end position="263"/>
    </location>
</feature>
<feature type="region of interest" description="Disordered" evidence="3">
    <location>
        <begin position="586"/>
        <end position="607"/>
    </location>
</feature>
<feature type="compositionally biased region" description="Low complexity" evidence="3">
    <location>
        <begin position="247"/>
        <end position="263"/>
    </location>
</feature>
<feature type="glycosylation site" description="N-linked (GlcNAc...) asparagine" evidence="2">
    <location>
        <position position="89"/>
    </location>
</feature>
<feature type="glycosylation site" description="N-linked (GlcNAc...) asparagine" evidence="2">
    <location>
        <position position="445"/>
    </location>
</feature>
<keyword id="KW-0029">Amino-acid transport</keyword>
<keyword id="KW-0072">Autophagy</keyword>
<keyword id="KW-0325">Glycoprotein</keyword>
<keyword id="KW-0472">Membrane</keyword>
<keyword id="KW-1185">Reference proteome</keyword>
<keyword id="KW-0812">Transmembrane</keyword>
<keyword id="KW-1133">Transmembrane helix</keyword>
<keyword id="KW-0813">Transport</keyword>
<keyword id="KW-0926">Vacuole</keyword>
<evidence type="ECO:0000250" key="1"/>
<evidence type="ECO:0000255" key="2"/>
<evidence type="ECO:0000256" key="3">
    <source>
        <dbReference type="SAM" id="MobiDB-lite"/>
    </source>
</evidence>
<evidence type="ECO:0000305" key="4"/>
<comment type="function">
    <text evidence="1">Vacuolar effluxer which mediate the efflux of amino acids resulting from autophagic degradation. The release of autophagic amino acids allows the maintenance of protein synthesis and viability during nitrogen starvation (By similarity).</text>
</comment>
<comment type="subcellular location">
    <subcellularLocation>
        <location evidence="1">Vacuole membrane</location>
        <topology evidence="1">Multi-pass membrane protein</topology>
    </subcellularLocation>
    <text evidence="1">Vacuole and punctate structures.</text>
</comment>
<comment type="similarity">
    <text evidence="4">Belongs to the ATG22 family.</text>
</comment>
<comment type="sequence caution" evidence="4">
    <conflict type="erroneous gene model prediction">
        <sequence resource="EMBL-CDS" id="BAE60491"/>
    </conflict>
</comment>
<name>AT222_ASPOR</name>
<proteinExistence type="inferred from homology"/>
<dbReference type="EMBL" id="BA000052">
    <property type="protein sequence ID" value="BAE60491.1"/>
    <property type="status" value="ALT_SEQ"/>
    <property type="molecule type" value="Genomic_DNA"/>
</dbReference>
<dbReference type="STRING" id="510516.Q2UD74"/>
<dbReference type="GlyCosmos" id="Q2UD74">
    <property type="glycosylation" value="2 sites, No reported glycans"/>
</dbReference>
<dbReference type="EnsemblFungi" id="BAE60491">
    <property type="protein sequence ID" value="BAE60491"/>
    <property type="gene ID" value="AO090012000289"/>
</dbReference>
<dbReference type="VEuPathDB" id="FungiDB:AO090012000289"/>
<dbReference type="Proteomes" id="UP000006564">
    <property type="component" value="Chromosome 4"/>
</dbReference>
<dbReference type="GO" id="GO:0005774">
    <property type="term" value="C:vacuolar membrane"/>
    <property type="evidence" value="ECO:0007669"/>
    <property type="project" value="UniProtKB-SubCell"/>
</dbReference>
<dbReference type="GO" id="GO:0022857">
    <property type="term" value="F:transmembrane transporter activity"/>
    <property type="evidence" value="ECO:0007669"/>
    <property type="project" value="InterPro"/>
</dbReference>
<dbReference type="GO" id="GO:0032974">
    <property type="term" value="P:amino acid transmembrane export from vacuole"/>
    <property type="evidence" value="ECO:0007669"/>
    <property type="project" value="InterPro"/>
</dbReference>
<dbReference type="GO" id="GO:0006914">
    <property type="term" value="P:autophagy"/>
    <property type="evidence" value="ECO:0007669"/>
    <property type="project" value="UniProtKB-KW"/>
</dbReference>
<dbReference type="CDD" id="cd17483">
    <property type="entry name" value="MFS_Atg22_like"/>
    <property type="match status" value="1"/>
</dbReference>
<dbReference type="Gene3D" id="1.20.1250.20">
    <property type="entry name" value="MFS general substrate transporter like domains"/>
    <property type="match status" value="1"/>
</dbReference>
<dbReference type="InterPro" id="IPR044738">
    <property type="entry name" value="Atg22"/>
</dbReference>
<dbReference type="InterPro" id="IPR024671">
    <property type="entry name" value="Atg22-like"/>
</dbReference>
<dbReference type="InterPro" id="IPR050495">
    <property type="entry name" value="ATG22/LtaA_families"/>
</dbReference>
<dbReference type="InterPro" id="IPR020846">
    <property type="entry name" value="MFS_dom"/>
</dbReference>
<dbReference type="InterPro" id="IPR036259">
    <property type="entry name" value="MFS_trans_sf"/>
</dbReference>
<dbReference type="PANTHER" id="PTHR23519">
    <property type="entry name" value="AUTOPHAGY-RELATED PROTEIN 22"/>
    <property type="match status" value="1"/>
</dbReference>
<dbReference type="PANTHER" id="PTHR23519:SF3">
    <property type="entry name" value="AUTOPHAGY-RELATED PROTEIN 22-2"/>
    <property type="match status" value="1"/>
</dbReference>
<dbReference type="Pfam" id="PF11700">
    <property type="entry name" value="ATG22"/>
    <property type="match status" value="1"/>
</dbReference>
<dbReference type="SUPFAM" id="SSF103473">
    <property type="entry name" value="MFS general substrate transporter"/>
    <property type="match status" value="2"/>
</dbReference>
<reference key="1">
    <citation type="journal article" date="2005" name="Nature">
        <title>Genome sequencing and analysis of Aspergillus oryzae.</title>
        <authorList>
            <person name="Machida M."/>
            <person name="Asai K."/>
            <person name="Sano M."/>
            <person name="Tanaka T."/>
            <person name="Kumagai T."/>
            <person name="Terai G."/>
            <person name="Kusumoto K."/>
            <person name="Arima T."/>
            <person name="Akita O."/>
            <person name="Kashiwagi Y."/>
            <person name="Abe K."/>
            <person name="Gomi K."/>
            <person name="Horiuchi H."/>
            <person name="Kitamoto K."/>
            <person name="Kobayashi T."/>
            <person name="Takeuchi M."/>
            <person name="Denning D.W."/>
            <person name="Galagan J.E."/>
            <person name="Nierman W.C."/>
            <person name="Yu J."/>
            <person name="Archer D.B."/>
            <person name="Bennett J.W."/>
            <person name="Bhatnagar D."/>
            <person name="Cleveland T.E."/>
            <person name="Fedorova N.D."/>
            <person name="Gotoh O."/>
            <person name="Horikawa H."/>
            <person name="Hosoyama A."/>
            <person name="Ichinomiya M."/>
            <person name="Igarashi R."/>
            <person name="Iwashita K."/>
            <person name="Juvvadi P.R."/>
            <person name="Kato M."/>
            <person name="Kato Y."/>
            <person name="Kin T."/>
            <person name="Kokubun A."/>
            <person name="Maeda H."/>
            <person name="Maeyama N."/>
            <person name="Maruyama J."/>
            <person name="Nagasaki H."/>
            <person name="Nakajima T."/>
            <person name="Oda K."/>
            <person name="Okada K."/>
            <person name="Paulsen I."/>
            <person name="Sakamoto K."/>
            <person name="Sawano T."/>
            <person name="Takahashi M."/>
            <person name="Takase K."/>
            <person name="Terabayashi Y."/>
            <person name="Wortman J.R."/>
            <person name="Yamada O."/>
            <person name="Yamagata Y."/>
            <person name="Anazawa H."/>
            <person name="Hata Y."/>
            <person name="Koide Y."/>
            <person name="Komori T."/>
            <person name="Koyama Y."/>
            <person name="Minetoki T."/>
            <person name="Suharnan S."/>
            <person name="Tanaka A."/>
            <person name="Isono K."/>
            <person name="Kuhara S."/>
            <person name="Ogasawara N."/>
            <person name="Kikuchi H."/>
        </authorList>
    </citation>
    <scope>NUCLEOTIDE SEQUENCE [LARGE SCALE GENOMIC DNA]</scope>
    <source>
        <strain>ATCC 42149 / RIB 40</strain>
    </source>
</reference>
<sequence>MTVAPPSPNSPAAELQQRPPRYPGEDTTPTSKREIWGWYAYGIAAEVFAVCGVGSFLPLTLEQLAREQGTFKSSHLPCVGPGSPSTSVNGTAPAMLRRDEAENDQCVVGLLGLNINTASFAMYTFSLAVLVQALTLISFSALADYENNRKTLLLAFGFIGSATSMLFVFIAPPIFVLGALLVVIGVTCLGSSFVVLNSFLPVLVANDPSIEKASKPAEELHPMSPDGEYIHPRDSFSASDAESGPHPAAEAGSGTSSGPASPELQLSTRISSKGVGLGYCAAVLVQILSISLLFTLSKTSISKVSGTLPLRFVLLLVGIWWFSFTMVTRKWLRARPGPPLNTANTGGQVKRWRVWLRLVGFAWKSLWKTVKIAVQLREVLVFLAAWFLLSDAMATVSGTAILFARTELKMSTTLVGLLSITATLSGMAGAFLWPVVSRRFGLKSNHTIMLCIALFEIIPLYGMLAYIPVFKKWGVIGLQQPWEIFPLAIVHGVVSGGLSSYCRSFFGLLIPPGSEAAFYALYAATDKGSSVIGPAIVGMLIDATGQVRSGFFFIAPLILMPIPLIWIVNAEKGRREGVAMAQRLEKGHETEMSEQTEEAEGLLARGI</sequence>
<gene>
    <name type="primary">atg22-2</name>
    <name type="ORF">AO090012000289</name>
</gene>
<protein>
    <recommendedName>
        <fullName>Autophagy-related protein 22-2</fullName>
    </recommendedName>
</protein>
<accession>Q2UD74</accession>